<proteinExistence type="evidence at protein level"/>
<reference key="1">
    <citation type="journal article" date="1996" name="Biochem. Biophys. Res. Commun.">
        <title>Molecular characterization of seizure-related genes isolated by differential screening.</title>
        <authorList>
            <person name="Kajiwara K."/>
            <person name="Nagawawa H."/>
            <person name="Shimizu-Nishikawa K."/>
            <person name="Ookura T."/>
            <person name="Kimura M."/>
            <person name="Sugaya E."/>
        </authorList>
    </citation>
    <scope>NUCLEOTIDE SEQUENCE [MRNA]</scope>
    <source>
        <strain>C57BL/6J</strain>
        <tissue>Brain</tissue>
    </source>
</reference>
<reference key="2">
    <citation type="submission" date="1996-09" db="EMBL/GenBank/DDBJ databases">
        <title>14-3-3 family members play an important role in tumorigenic transformation of NIH 3T3 cells and retinoic acid-mediated F9 cell differentiation.</title>
        <authorList>
            <person name="Takihara Y."/>
            <person name="Irie K."/>
            <person name="Nomura M."/>
            <person name="Motaleb M."/>
            <person name="Matsumoto K."/>
            <person name="Shimada K."/>
        </authorList>
    </citation>
    <scope>NUCLEOTIDE SEQUENCE [MRNA]</scope>
    <source>
        <strain>129/Sv</strain>
    </source>
</reference>
<reference key="3">
    <citation type="journal article" date="1997" name="Mol. Gen. Genet.">
        <title>The Cdk-like protein PCTAIRE-1 from mouse brain associates with p11 and 14-3-3 proteins.</title>
        <authorList>
            <person name="Sladeczek F."/>
            <person name="Camonis J.H."/>
            <person name="Burnol A.-F."/>
            <person name="Le Bouffant F."/>
        </authorList>
    </citation>
    <scope>NUCLEOTIDE SEQUENCE [MRNA]</scope>
    <scope>INTERACTION WITH CDK16</scope>
</reference>
<reference key="4">
    <citation type="journal article" date="1997" name="Biochem. Biophys. Res. Commun.">
        <title>14-3-3 zeta protein binds to the carboxyl half of mouse wee1 kinase.</title>
        <authorList>
            <person name="Honda R."/>
            <person name="Ohba Y."/>
            <person name="Yasuda H."/>
        </authorList>
    </citation>
    <scope>NUCLEOTIDE SEQUENCE [MRNA]</scope>
    <scope>INTERACTION WITH WEE1</scope>
</reference>
<reference key="5">
    <citation type="journal article" date="2005" name="Science">
        <title>The transcriptional landscape of the mammalian genome.</title>
        <authorList>
            <person name="Carninci P."/>
            <person name="Kasukawa T."/>
            <person name="Katayama S."/>
            <person name="Gough J."/>
            <person name="Frith M.C."/>
            <person name="Maeda N."/>
            <person name="Oyama R."/>
            <person name="Ravasi T."/>
            <person name="Lenhard B."/>
            <person name="Wells C."/>
            <person name="Kodzius R."/>
            <person name="Shimokawa K."/>
            <person name="Bajic V.B."/>
            <person name="Brenner S.E."/>
            <person name="Batalov S."/>
            <person name="Forrest A.R."/>
            <person name="Zavolan M."/>
            <person name="Davis M.J."/>
            <person name="Wilming L.G."/>
            <person name="Aidinis V."/>
            <person name="Allen J.E."/>
            <person name="Ambesi-Impiombato A."/>
            <person name="Apweiler R."/>
            <person name="Aturaliya R.N."/>
            <person name="Bailey T.L."/>
            <person name="Bansal M."/>
            <person name="Baxter L."/>
            <person name="Beisel K.W."/>
            <person name="Bersano T."/>
            <person name="Bono H."/>
            <person name="Chalk A.M."/>
            <person name="Chiu K.P."/>
            <person name="Choudhary V."/>
            <person name="Christoffels A."/>
            <person name="Clutterbuck D.R."/>
            <person name="Crowe M.L."/>
            <person name="Dalla E."/>
            <person name="Dalrymple B.P."/>
            <person name="de Bono B."/>
            <person name="Della Gatta G."/>
            <person name="di Bernardo D."/>
            <person name="Down T."/>
            <person name="Engstrom P."/>
            <person name="Fagiolini M."/>
            <person name="Faulkner G."/>
            <person name="Fletcher C.F."/>
            <person name="Fukushima T."/>
            <person name="Furuno M."/>
            <person name="Futaki S."/>
            <person name="Gariboldi M."/>
            <person name="Georgii-Hemming P."/>
            <person name="Gingeras T.R."/>
            <person name="Gojobori T."/>
            <person name="Green R.E."/>
            <person name="Gustincich S."/>
            <person name="Harbers M."/>
            <person name="Hayashi Y."/>
            <person name="Hensch T.K."/>
            <person name="Hirokawa N."/>
            <person name="Hill D."/>
            <person name="Huminiecki L."/>
            <person name="Iacono M."/>
            <person name="Ikeo K."/>
            <person name="Iwama A."/>
            <person name="Ishikawa T."/>
            <person name="Jakt M."/>
            <person name="Kanapin A."/>
            <person name="Katoh M."/>
            <person name="Kawasawa Y."/>
            <person name="Kelso J."/>
            <person name="Kitamura H."/>
            <person name="Kitano H."/>
            <person name="Kollias G."/>
            <person name="Krishnan S.P."/>
            <person name="Kruger A."/>
            <person name="Kummerfeld S.K."/>
            <person name="Kurochkin I.V."/>
            <person name="Lareau L.F."/>
            <person name="Lazarevic D."/>
            <person name="Lipovich L."/>
            <person name="Liu J."/>
            <person name="Liuni S."/>
            <person name="McWilliam S."/>
            <person name="Madan Babu M."/>
            <person name="Madera M."/>
            <person name="Marchionni L."/>
            <person name="Matsuda H."/>
            <person name="Matsuzawa S."/>
            <person name="Miki H."/>
            <person name="Mignone F."/>
            <person name="Miyake S."/>
            <person name="Morris K."/>
            <person name="Mottagui-Tabar S."/>
            <person name="Mulder N."/>
            <person name="Nakano N."/>
            <person name="Nakauchi H."/>
            <person name="Ng P."/>
            <person name="Nilsson R."/>
            <person name="Nishiguchi S."/>
            <person name="Nishikawa S."/>
            <person name="Nori F."/>
            <person name="Ohara O."/>
            <person name="Okazaki Y."/>
            <person name="Orlando V."/>
            <person name="Pang K.C."/>
            <person name="Pavan W.J."/>
            <person name="Pavesi G."/>
            <person name="Pesole G."/>
            <person name="Petrovsky N."/>
            <person name="Piazza S."/>
            <person name="Reed J."/>
            <person name="Reid J.F."/>
            <person name="Ring B.Z."/>
            <person name="Ringwald M."/>
            <person name="Rost B."/>
            <person name="Ruan Y."/>
            <person name="Salzberg S.L."/>
            <person name="Sandelin A."/>
            <person name="Schneider C."/>
            <person name="Schoenbach C."/>
            <person name="Sekiguchi K."/>
            <person name="Semple C.A."/>
            <person name="Seno S."/>
            <person name="Sessa L."/>
            <person name="Sheng Y."/>
            <person name="Shibata Y."/>
            <person name="Shimada H."/>
            <person name="Shimada K."/>
            <person name="Silva D."/>
            <person name="Sinclair B."/>
            <person name="Sperling S."/>
            <person name="Stupka E."/>
            <person name="Sugiura K."/>
            <person name="Sultana R."/>
            <person name="Takenaka Y."/>
            <person name="Taki K."/>
            <person name="Tammoja K."/>
            <person name="Tan S.L."/>
            <person name="Tang S."/>
            <person name="Taylor M.S."/>
            <person name="Tegner J."/>
            <person name="Teichmann S.A."/>
            <person name="Ueda H.R."/>
            <person name="van Nimwegen E."/>
            <person name="Verardo R."/>
            <person name="Wei C.L."/>
            <person name="Yagi K."/>
            <person name="Yamanishi H."/>
            <person name="Zabarovsky E."/>
            <person name="Zhu S."/>
            <person name="Zimmer A."/>
            <person name="Hide W."/>
            <person name="Bult C."/>
            <person name="Grimmond S.M."/>
            <person name="Teasdale R.D."/>
            <person name="Liu E.T."/>
            <person name="Brusic V."/>
            <person name="Quackenbush J."/>
            <person name="Wahlestedt C."/>
            <person name="Mattick J.S."/>
            <person name="Hume D.A."/>
            <person name="Kai C."/>
            <person name="Sasaki D."/>
            <person name="Tomaru Y."/>
            <person name="Fukuda S."/>
            <person name="Kanamori-Katayama M."/>
            <person name="Suzuki M."/>
            <person name="Aoki J."/>
            <person name="Arakawa T."/>
            <person name="Iida J."/>
            <person name="Imamura K."/>
            <person name="Itoh M."/>
            <person name="Kato T."/>
            <person name="Kawaji H."/>
            <person name="Kawagashira N."/>
            <person name="Kawashima T."/>
            <person name="Kojima M."/>
            <person name="Kondo S."/>
            <person name="Konno H."/>
            <person name="Nakano K."/>
            <person name="Ninomiya N."/>
            <person name="Nishio T."/>
            <person name="Okada M."/>
            <person name="Plessy C."/>
            <person name="Shibata K."/>
            <person name="Shiraki T."/>
            <person name="Suzuki S."/>
            <person name="Tagami M."/>
            <person name="Waki K."/>
            <person name="Watahiki A."/>
            <person name="Okamura-Oho Y."/>
            <person name="Suzuki H."/>
            <person name="Kawai J."/>
            <person name="Hayashizaki Y."/>
        </authorList>
    </citation>
    <scope>NUCLEOTIDE SEQUENCE [LARGE SCALE MRNA]</scope>
    <source>
        <strain>C57BL/6J</strain>
        <tissue>Blastocyst</tissue>
        <tissue>Bone marrow macrophage</tissue>
        <tissue>Egg</tissue>
        <tissue>Embryonic kidney</tissue>
        <tissue>Thymus</tissue>
    </source>
</reference>
<reference key="6">
    <citation type="journal article" date="2004" name="Genome Res.">
        <title>The status, quality, and expansion of the NIH full-length cDNA project: the Mammalian Gene Collection (MGC).</title>
        <authorList>
            <consortium name="The MGC Project Team"/>
        </authorList>
    </citation>
    <scope>NUCLEOTIDE SEQUENCE [LARGE SCALE MRNA]</scope>
    <source>
        <strain>C57BL/6J</strain>
        <tissue>Brain</tissue>
    </source>
</reference>
<reference key="7">
    <citation type="submission" date="2009-01" db="UniProtKB">
        <authorList>
            <person name="Lubec G."/>
            <person name="Kang S.U."/>
            <person name="Klug S."/>
            <person name="Friebe K."/>
            <person name="Yang J.W."/>
            <person name="Zigmond M."/>
            <person name="Sunyer B."/>
            <person name="Chen W.-Q."/>
        </authorList>
    </citation>
    <scope>PROTEIN SEQUENCE OF 12-55; 61-68; 84-115; 128-167 AND 194-245</scope>
    <scope>IDENTIFICATION BY MASS SPECTROMETRY</scope>
    <source>
        <strain>C57BL/6J</strain>
        <strain>OF1</strain>
        <tissue>Brain</tissue>
        <tissue>Hippocampus</tissue>
    </source>
</reference>
<reference key="8">
    <citation type="journal article" date="1998" name="J. Biol. Chem.">
        <title>A novel sphingosine-dependent protein kinase (SDK1) specifically phosphorylates certain isoforms of 14-3-3 protein.</title>
        <authorList>
            <person name="Megidish T."/>
            <person name="Cooper J."/>
            <person name="Zhang L."/>
            <person name="Fu H."/>
            <person name="Hakomori S."/>
        </authorList>
    </citation>
    <scope>PHOSPHORYLATION AT SER-58</scope>
</reference>
<reference key="9">
    <citation type="journal article" date="1999" name="J. Biol. Chem.">
        <title>Nuclear localization of protein kinase U-alpha is regulated by 14-3-3.</title>
        <authorList>
            <person name="Zhang S."/>
            <person name="Xing H."/>
            <person name="Muslin A.J."/>
        </authorList>
    </citation>
    <scope>INTERACTION WITH TLK2</scope>
</reference>
<reference key="10">
    <citation type="journal article" date="2002" name="J. Biol. Chem.">
        <title>MADM, a novel adaptor protein that mediates phosphorylation of the 14-3-3 binding site of myeloid leukemia factor 1.</title>
        <authorList>
            <person name="Lim R."/>
            <person name="Winteringham L.N."/>
            <person name="Williams J.H."/>
            <person name="McCulloch R.K."/>
            <person name="Ingley E."/>
            <person name="Tiao J.Y.-H."/>
            <person name="Lalonde J.-P."/>
            <person name="Tsai S."/>
            <person name="Tilbrook P.A."/>
            <person name="Sun Y."/>
            <person name="Wu X."/>
            <person name="Morris S.W."/>
            <person name="Klinken S.P."/>
        </authorList>
    </citation>
    <scope>INTERACTION WITH MLF1</scope>
</reference>
<reference key="11">
    <citation type="journal article" date="2004" name="Mol. Cell. Proteomics">
        <title>Phosphoproteomic analysis of the developing mouse brain.</title>
        <authorList>
            <person name="Ballif B.A."/>
            <person name="Villen J."/>
            <person name="Beausoleil S.A."/>
            <person name="Schwartz D."/>
            <person name="Gygi S.P."/>
        </authorList>
    </citation>
    <scope>IDENTIFICATION BY MASS SPECTROMETRY [LARGE SCALE ANALYSIS]</scope>
    <source>
        <tissue>Embryonic brain</tissue>
    </source>
</reference>
<reference key="12">
    <citation type="journal article" date="2006" name="Mol. Cell. Proteomics">
        <title>Transgenic mouse proteomics identifies new 14-3-3-associated proteins involved in cytoskeletal rearrangements and cell signaling.</title>
        <authorList>
            <person name="Angrand P.O."/>
            <person name="Segura I."/>
            <person name="Voelkel P."/>
            <person name="Ghidelli S."/>
            <person name="Terry R."/>
            <person name="Brajenovic M."/>
            <person name="Vintersten K."/>
            <person name="Klein R."/>
            <person name="Superti-Furga G."/>
            <person name="Drewes G."/>
            <person name="Kuster B."/>
            <person name="Bouwmeester T."/>
            <person name="Acker-Palmer A."/>
        </authorList>
    </citation>
    <scope>INTERACTION WITH ARHGEF7 AND GIT1</scope>
</reference>
<reference key="13">
    <citation type="journal article" date="2010" name="Cell">
        <title>A tissue-specific atlas of mouse protein phosphorylation and expression.</title>
        <authorList>
            <person name="Huttlin E.L."/>
            <person name="Jedrychowski M.P."/>
            <person name="Elias J.E."/>
            <person name="Goswami T."/>
            <person name="Rad R."/>
            <person name="Beausoleil S.A."/>
            <person name="Villen J."/>
            <person name="Haas W."/>
            <person name="Sowa M.E."/>
            <person name="Gygi S.P."/>
        </authorList>
    </citation>
    <scope>PHOSPHORYLATION [LARGE SCALE ANALYSIS] AT SER-207</scope>
    <scope>IDENTIFICATION BY MASS SPECTROMETRY [LARGE SCALE ANALYSIS]</scope>
    <source>
        <tissue>Brain</tissue>
        <tissue>Brown adipose tissue</tissue>
        <tissue>Heart</tissue>
        <tissue>Kidney</tissue>
        <tissue>Liver</tissue>
        <tissue>Lung</tissue>
        <tissue>Pancreas</tissue>
        <tissue>Spleen</tissue>
        <tissue>Testis</tissue>
    </source>
</reference>
<reference key="14">
    <citation type="journal article" date="2010" name="Int. J. Biochem. Cell Biol.">
        <title>SLy2 targets the nuclear SAP30/HDAC1 complex.</title>
        <authorList>
            <person name="Brandt S."/>
            <person name="Ellwanger K."/>
            <person name="Beuter-Gunia C."/>
            <person name="Schuster M."/>
            <person name="Hausser A."/>
            <person name="Schmitz I."/>
            <person name="Beer-Hammer S."/>
        </authorList>
    </citation>
    <scope>INTERACTION WITH SAMSN1</scope>
</reference>
<reference key="15">
    <citation type="journal article" date="2011" name="J. Biol. Chem.">
        <title>Identification of a novel Bcl-2-interacting mediator of cell death (Bim) E3 ligase, tripartite motif-containing protein 2 (TRIM2), and its role in rapid ischemic tolerance-induced neuroprotection.</title>
        <authorList>
            <person name="Thompson S."/>
            <person name="Pearson A.N."/>
            <person name="Ashley M.D."/>
            <person name="Jessick V."/>
            <person name="Murphy B.M."/>
            <person name="Gafken P."/>
            <person name="Henshall D.C."/>
            <person name="Morris K.T."/>
            <person name="Simon R.P."/>
            <person name="Meller R."/>
        </authorList>
    </citation>
    <scope>INTERACTION WITH BCL2L11</scope>
</reference>
<reference key="16">
    <citation type="journal article" date="2012" name="Int. J. Biol. Sci.">
        <title>Differential expression and functional analysis of the tristetraprolin family during early differentiation of 3T3-L1 preadipocytes.</title>
        <authorList>
            <person name="Lin N.Y."/>
            <person name="Lin T.Y."/>
            <person name="Yang W.H."/>
            <person name="Wang S.C."/>
            <person name="Wang K.T."/>
            <person name="Su Y.L."/>
            <person name="Jiang Y.W."/>
            <person name="Chang G.D."/>
            <person name="Chang C.J."/>
        </authorList>
    </citation>
    <scope>INTERACTION WITH ZFP36L1</scope>
</reference>
<reference key="17">
    <citation type="journal article" date="2015" name="Biochem. Biophys. Res. Commun.">
        <title>Suppression of death-associated protein kinase 2 by interaction with 14-3-3 proteins.</title>
        <authorList>
            <person name="Yuasa K."/>
            <person name="Ota R."/>
            <person name="Matsuda S."/>
            <person name="Isshiki K."/>
            <person name="Inoue M."/>
            <person name="Tsuji A."/>
        </authorList>
    </citation>
    <scope>INTERACTION WITH DAPK2</scope>
</reference>
<accession>P63101</accession>
<accession>P35215</accession>
<accession>P70197</accession>
<accession>P97286</accession>
<accession>Q3TSF1</accession>
<accession>Q5EBQ1</accession>
<comment type="function">
    <text evidence="1 4">Adapter protein implicated in the regulation of a large spectrum of both general and specialized signaling pathways. Binds to a large number of partners, usually by recognition of a phosphoserine or phosphothreonine motif. Binding generally results in the modulation of the activity of the binding partner. Promotes cytosolic retention and inactivation of TFEB transcription factor by binding to phosphorylated TFEB. Induces ARHGEF7 activity on RAC1 as well as lamellipodia and membrane ruffle formation (By similarity). In neurons, regulates spine maturation through the modulation of ARHGEF7 activity (By similarity).</text>
</comment>
<comment type="subunit">
    <text evidence="4 5 6 7 8 9 10 11 12 13 14">Homodimer. Heterodimerizes with YWHAE (By similarity). Homo- and heterodimerization is inhibited by phosphorylation on Ser-58 (By similarity). Interacts with FOXO4, NOXA1, SSH1 and ARHGEF2. Interacts with CDK16 and with WEE1 (C-terminal). Interacts with MLF1 (phosphorylated form); the interaction retains it in the cytoplasm. Interacts with BSPRY. Interacts with Thr-phosphorylated ITGB2 (By similarity). Interacts with Pseudomonas aeruginosa exoS (unphosphorylated form). Interacts with BAX; the interaction occurs in the cytoplasm. Under stress conditions, MAPK8-mediated phosphorylation releases BAX to mitochondria. Interacts with phosphorylated RAF1; the interaction is inhibited when YWHAZ is phosphorylated on Thr-232. Interacts with TP53; the interaction enhances p53 transcriptional activity. The Ser-58 phosphorylated form inhibits this interaction and p53 transcriptional activity. Interacts with ABL1 (phosphorylated form); the interaction retains ABL1 in the cytoplasm. Interacts with PKA-phosphorylated AANAT; the interaction modulates AANAT enzymatic activity by increasing affinity for arylalkylamines and acetyl-CoA and protecting the enzyme from dephosphorylation and proteasomal degradation (By similarity). It may also prevent thiol-dependent inactivation (By similarity). Interacts with AKT1; the interaction phosphorylates YWHAZ and modulates dimerization (By similarity). Interacts with GAB2 (By similarity). Interacts with SAMSN1. Interacts with BCL2L11 and TLK2. Interacts with the 'Thr-369' phosphorylated form of DAPK2 (PubMed:26047703). Interacts with PI4KB, TBC1D22A and TBC1D22B (By similarity). Interacts with ZFP36L1 (via phosphorylated form); this interaction occurs in a p38 MAPK- and AKT-signaling pathways (PubMed:22701344). Interacts with SLITRK1 (By similarity). Interacts with AK5, LDB1, MADD, PDE1A and SMARCB1 (By similarity). Interacts with ARHGEF7 and GIT1 (PubMed:16959763). Interacts with MEFV (By similarity). Interacts with ADAM22 (via C-terminus) (By similarity).</text>
</comment>
<comment type="interaction">
    <interactant intactId="EBI-354751">
        <id>P63101</id>
    </interactant>
    <interactant intactId="EBI-2693710">
        <id>Q5S006</id>
        <label>Lrrk2</label>
    </interactant>
    <organismsDiffer>false</organismsDiffer>
    <experiments>5</experiments>
</comment>
<comment type="interaction">
    <interactant intactId="EBI-354751">
        <id>P63101</id>
    </interactant>
    <interactant intactId="EBI-354765">
        <id>Q9QWV4</id>
        <label>Mlf1</label>
    </interactant>
    <organismsDiffer>false</organismsDiffer>
    <experiments>3</experiments>
</comment>
<comment type="interaction">
    <interactant intactId="EBI-354751">
        <id>P63101</id>
    </interactant>
    <interactant intactId="EBI-1644164">
        <id>O43524</id>
        <label>FOXO3</label>
    </interactant>
    <organismsDiffer>true</organismsDiffer>
    <experiments>2</experiments>
</comment>
<comment type="interaction">
    <interactant intactId="EBI-354751">
        <id>P63101</id>
    </interactant>
    <interactant intactId="EBI-1049099">
        <id>Q92945</id>
        <label>KHSRP</label>
    </interactant>
    <organismsDiffer>true</organismsDiffer>
    <experiments>2</experiments>
</comment>
<comment type="subcellular location">
    <subcellularLocation>
        <location evidence="4">Cytoplasm</location>
    </subcellularLocation>
    <subcellularLocation>
        <location evidence="4">Melanosome</location>
    </subcellularLocation>
    <text evidence="4">Located to stage I to stage IV melanosomes.</text>
</comment>
<comment type="PTM">
    <text evidence="4 15 16">The delta, brain-specific form differs from the zeta form in being phosphorylated (Probable). Phosphorylation on Ser-184 by MAPK8; promotes dissociation of BAX and translocation of BAX to mitochondria (By similarity). Phosphorylation on Thr-232; inhibits binding of RAF1 (By similarity). Phosphorylated on Ser-58 by PKA and protein kinase C delta type catalytic subunit in a sphingosine-dependent fashion (PubMed:9705322). Phosphorylation on Ser-58 by PKA; disrupts homodimerization and heterodimerization with YHAE and TP53 (By similarity).</text>
</comment>
<comment type="similarity">
    <text evidence="16">Belongs to the 14-3-3 family.</text>
</comment>
<feature type="chain" id="PRO_0000058628" description="14-3-3 protein zeta/delta">
    <location>
        <begin position="1"/>
        <end position="245"/>
    </location>
</feature>
<feature type="site" description="Interaction with phosphoserine on interacting protein" evidence="3">
    <location>
        <position position="56"/>
    </location>
</feature>
<feature type="site" description="Interaction with phosphoserine on interacting protein" evidence="3">
    <location>
        <position position="127"/>
    </location>
</feature>
<feature type="modified residue" description="N-acetylmethionine" evidence="4">
    <location>
        <position position="1"/>
    </location>
</feature>
<feature type="modified residue" description="N6-acetyllysine" evidence="4">
    <location>
        <position position="3"/>
    </location>
</feature>
<feature type="modified residue" description="Phosphoserine; by PKA" evidence="15">
    <location>
        <position position="58"/>
    </location>
</feature>
<feature type="modified residue" description="N6-acetyllysine" evidence="4">
    <location>
        <position position="68"/>
    </location>
</feature>
<feature type="modified residue" description="Phosphoserine" evidence="4">
    <location>
        <position position="184"/>
    </location>
</feature>
<feature type="modified residue" description="Phosphoserine" evidence="17">
    <location>
        <position position="207"/>
    </location>
</feature>
<feature type="modified residue" description="Phosphoserine" evidence="2">
    <location>
        <position position="210"/>
    </location>
</feature>
<feature type="modified residue" description="Phosphothreonine; by CK1" evidence="4">
    <location>
        <position position="232"/>
    </location>
</feature>
<feature type="sequence conflict" description="In Ref. 4; BAA11751." evidence="16" ref="4">
    <original>M</original>
    <variation>V</variation>
    <location>
        <position position="78"/>
    </location>
</feature>
<feature type="sequence conflict" description="In Ref. 5; BAE36724." evidence="16" ref="5">
    <original>K</original>
    <variation>R</variation>
    <location>
        <position position="139"/>
    </location>
</feature>
<feature type="sequence conflict" description="In Ref. 2; BAA13421." evidence="16" ref="2">
    <original>MQ</original>
    <variation>IE</variation>
    <location>
        <begin position="218"/>
        <end position="219"/>
    </location>
</feature>
<feature type="sequence conflict" description="In Ref. 4; BAA11751." evidence="16" ref="4">
    <original>E</original>
    <variation>D</variation>
    <location>
        <position position="236"/>
    </location>
</feature>
<feature type="helix" evidence="18">
    <location>
        <begin position="3"/>
        <end position="15"/>
    </location>
</feature>
<feature type="helix" evidence="18">
    <location>
        <begin position="19"/>
        <end position="31"/>
    </location>
</feature>
<feature type="helix" evidence="18">
    <location>
        <begin position="38"/>
        <end position="66"/>
    </location>
</feature>
<feature type="helix" evidence="18">
    <location>
        <begin position="73"/>
        <end position="103"/>
    </location>
</feature>
<feature type="turn" evidence="18">
    <location>
        <begin position="104"/>
        <end position="108"/>
    </location>
</feature>
<feature type="helix" evidence="18">
    <location>
        <begin position="112"/>
        <end position="130"/>
    </location>
</feature>
<feature type="helix" evidence="18">
    <location>
        <begin position="137"/>
        <end position="159"/>
    </location>
</feature>
<feature type="helix" evidence="18">
    <location>
        <begin position="165"/>
        <end position="180"/>
    </location>
</feature>
<feature type="helix" evidence="18">
    <location>
        <begin position="187"/>
        <end position="200"/>
    </location>
</feature>
<feature type="turn" evidence="18">
    <location>
        <begin position="208"/>
        <end position="210"/>
    </location>
</feature>
<feature type="helix" evidence="18">
    <location>
        <begin position="211"/>
        <end position="228"/>
    </location>
</feature>
<gene>
    <name type="primary">Ywhaz</name>
</gene>
<keyword id="KW-0002">3D-structure</keyword>
<keyword id="KW-0007">Acetylation</keyword>
<keyword id="KW-0963">Cytoplasm</keyword>
<keyword id="KW-0903">Direct protein sequencing</keyword>
<keyword id="KW-0597">Phosphoprotein</keyword>
<keyword id="KW-1185">Reference proteome</keyword>
<evidence type="ECO:0000250" key="1">
    <source>
        <dbReference type="UniProtKB" id="O55043"/>
    </source>
</evidence>
<evidence type="ECO:0000250" key="2">
    <source>
        <dbReference type="UniProtKB" id="P63102"/>
    </source>
</evidence>
<evidence type="ECO:0000250" key="3">
    <source>
        <dbReference type="UniProtKB" id="P63103"/>
    </source>
</evidence>
<evidence type="ECO:0000250" key="4">
    <source>
        <dbReference type="UniProtKB" id="P63104"/>
    </source>
</evidence>
<evidence type="ECO:0000250" key="5">
    <source>
        <dbReference type="UniProtKB" id="Q9ES28"/>
    </source>
</evidence>
<evidence type="ECO:0000269" key="6">
    <source>
    </source>
</evidence>
<evidence type="ECO:0000269" key="7">
    <source>
    </source>
</evidence>
<evidence type="ECO:0000269" key="8">
    <source>
    </source>
</evidence>
<evidence type="ECO:0000269" key="9">
    <source>
    </source>
</evidence>
<evidence type="ECO:0000269" key="10">
    <source>
    </source>
</evidence>
<evidence type="ECO:0000269" key="11">
    <source>
    </source>
</evidence>
<evidence type="ECO:0000269" key="12">
    <source>
    </source>
</evidence>
<evidence type="ECO:0000269" key="13">
    <source>
    </source>
</evidence>
<evidence type="ECO:0000269" key="14">
    <source>
    </source>
</evidence>
<evidence type="ECO:0000269" key="15">
    <source>
    </source>
</evidence>
<evidence type="ECO:0000305" key="16"/>
<evidence type="ECO:0007744" key="17">
    <source>
    </source>
</evidence>
<evidence type="ECO:0007829" key="18">
    <source>
        <dbReference type="PDB" id="7EXE"/>
    </source>
</evidence>
<organism>
    <name type="scientific">Mus musculus</name>
    <name type="common">Mouse</name>
    <dbReference type="NCBI Taxonomy" id="10090"/>
    <lineage>
        <taxon>Eukaryota</taxon>
        <taxon>Metazoa</taxon>
        <taxon>Chordata</taxon>
        <taxon>Craniata</taxon>
        <taxon>Vertebrata</taxon>
        <taxon>Euteleostomi</taxon>
        <taxon>Mammalia</taxon>
        <taxon>Eutheria</taxon>
        <taxon>Euarchontoglires</taxon>
        <taxon>Glires</taxon>
        <taxon>Rodentia</taxon>
        <taxon>Myomorpha</taxon>
        <taxon>Muroidea</taxon>
        <taxon>Muridae</taxon>
        <taxon>Murinae</taxon>
        <taxon>Mus</taxon>
        <taxon>Mus</taxon>
    </lineage>
</organism>
<dbReference type="EMBL" id="D78647">
    <property type="protein sequence ID" value="BAA11464.1"/>
    <property type="molecule type" value="mRNA"/>
</dbReference>
<dbReference type="EMBL" id="D87660">
    <property type="protein sequence ID" value="BAA13421.1"/>
    <property type="molecule type" value="mRNA"/>
</dbReference>
<dbReference type="EMBL" id="U79231">
    <property type="protein sequence ID" value="AAC53254.1"/>
    <property type="molecule type" value="mRNA"/>
</dbReference>
<dbReference type="EMBL" id="D83037">
    <property type="protein sequence ID" value="BAA11751.1"/>
    <property type="molecule type" value="mRNA"/>
</dbReference>
<dbReference type="EMBL" id="AK083368">
    <property type="protein sequence ID" value="BAC38887.1"/>
    <property type="molecule type" value="mRNA"/>
</dbReference>
<dbReference type="EMBL" id="AK145657">
    <property type="protein sequence ID" value="BAE26570.1"/>
    <property type="molecule type" value="mRNA"/>
</dbReference>
<dbReference type="EMBL" id="AK146800">
    <property type="protein sequence ID" value="BAE27442.1"/>
    <property type="molecule type" value="mRNA"/>
</dbReference>
<dbReference type="EMBL" id="AK150381">
    <property type="protein sequence ID" value="BAE29512.1"/>
    <property type="molecule type" value="mRNA"/>
</dbReference>
<dbReference type="EMBL" id="AK151900">
    <property type="protein sequence ID" value="BAE30783.1"/>
    <property type="molecule type" value="mRNA"/>
</dbReference>
<dbReference type="EMBL" id="AK162099">
    <property type="protein sequence ID" value="BAE36724.1"/>
    <property type="molecule type" value="mRNA"/>
</dbReference>
<dbReference type="EMBL" id="AK167128">
    <property type="protein sequence ID" value="BAE39275.1"/>
    <property type="molecule type" value="mRNA"/>
</dbReference>
<dbReference type="EMBL" id="BC050891">
    <property type="protein sequence ID" value="AAH50891.1"/>
    <property type="molecule type" value="mRNA"/>
</dbReference>
<dbReference type="EMBL" id="BC089334">
    <property type="protein sequence ID" value="AAH89334.1"/>
    <property type="molecule type" value="mRNA"/>
</dbReference>
<dbReference type="CCDS" id="CCDS27432.1"/>
<dbReference type="PIR" id="JC5384">
    <property type="entry name" value="JC5384"/>
</dbReference>
<dbReference type="RefSeq" id="NP_001240734.1">
    <property type="nucleotide sequence ID" value="NM_001253805.1"/>
</dbReference>
<dbReference type="RefSeq" id="NP_001240735.1">
    <property type="nucleotide sequence ID" value="NM_001253806.1"/>
</dbReference>
<dbReference type="RefSeq" id="NP_001343498.1">
    <property type="nucleotide sequence ID" value="NM_001356569.1"/>
</dbReference>
<dbReference type="RefSeq" id="NP_035870.1">
    <property type="nucleotide sequence ID" value="NM_011740.3"/>
</dbReference>
<dbReference type="RefSeq" id="XP_011243654.1">
    <property type="nucleotide sequence ID" value="XM_011245352.2"/>
</dbReference>
<dbReference type="RefSeq" id="XP_030104387.1">
    <property type="nucleotide sequence ID" value="XM_030248527.2"/>
</dbReference>
<dbReference type="PDB" id="7EXE">
    <property type="method" value="X-ray"/>
    <property type="resolution" value="2.75 A"/>
    <property type="chains" value="A/B=2-245"/>
</dbReference>
<dbReference type="PDBsum" id="7EXE"/>
<dbReference type="BMRB" id="P63101"/>
<dbReference type="SMR" id="P63101"/>
<dbReference type="BioGRID" id="204623">
    <property type="interactions" value="213"/>
</dbReference>
<dbReference type="ComplexPortal" id="CPX-1148">
    <property type="entry name" value="Foxo3-Ywhaz complex"/>
</dbReference>
<dbReference type="CORUM" id="P63101"/>
<dbReference type="DIP" id="DIP-31894N"/>
<dbReference type="FunCoup" id="P63101">
    <property type="interactions" value="3425"/>
</dbReference>
<dbReference type="IntAct" id="P63101">
    <property type="interactions" value="187"/>
</dbReference>
<dbReference type="MINT" id="P63101"/>
<dbReference type="STRING" id="10090.ENSMUSP00000022894"/>
<dbReference type="GlyGen" id="P63101">
    <property type="glycosylation" value="4 sites, 3 N-linked glycans (3 sites), 1 O-linked glycan (1 site)"/>
</dbReference>
<dbReference type="iPTMnet" id="P63101"/>
<dbReference type="MetOSite" id="P63101"/>
<dbReference type="PhosphoSitePlus" id="P63101"/>
<dbReference type="SwissPalm" id="P63101"/>
<dbReference type="REPRODUCTION-2DPAGE" id="P63101"/>
<dbReference type="jPOST" id="P63101"/>
<dbReference type="PaxDb" id="10090-ENSMUSP00000022894"/>
<dbReference type="PeptideAtlas" id="P63101"/>
<dbReference type="ProteomicsDB" id="285983"/>
<dbReference type="Pumba" id="P63101"/>
<dbReference type="TopDownProteomics" id="P63101"/>
<dbReference type="Antibodypedia" id="3905">
    <property type="antibodies" value="1010 antibodies from 44 providers"/>
</dbReference>
<dbReference type="DNASU" id="22631"/>
<dbReference type="Ensembl" id="ENSMUST00000022894.14">
    <property type="protein sequence ID" value="ENSMUSP00000022894.8"/>
    <property type="gene ID" value="ENSMUSG00000022285.18"/>
</dbReference>
<dbReference type="Ensembl" id="ENSMUST00000110361.8">
    <property type="protein sequence ID" value="ENSMUSP00000105990.2"/>
    <property type="gene ID" value="ENSMUSG00000022285.18"/>
</dbReference>
<dbReference type="Ensembl" id="ENSMUST00000110362.4">
    <property type="protein sequence ID" value="ENSMUSP00000105991.4"/>
    <property type="gene ID" value="ENSMUSG00000022285.18"/>
</dbReference>
<dbReference type="GeneID" id="22631"/>
<dbReference type="KEGG" id="mmu:22631"/>
<dbReference type="UCSC" id="uc007vmz.2">
    <property type="organism name" value="mouse"/>
</dbReference>
<dbReference type="AGR" id="MGI:109484"/>
<dbReference type="CTD" id="7534"/>
<dbReference type="MGI" id="MGI:109484">
    <property type="gene designation" value="Ywhaz"/>
</dbReference>
<dbReference type="VEuPathDB" id="HostDB:ENSMUSG00000022285"/>
<dbReference type="eggNOG" id="KOG0841">
    <property type="taxonomic scope" value="Eukaryota"/>
</dbReference>
<dbReference type="GeneTree" id="ENSGT01090000260040"/>
<dbReference type="HOGENOM" id="CLU_058290_1_0_1"/>
<dbReference type="InParanoid" id="P63101"/>
<dbReference type="OMA" id="YDEMVNE"/>
<dbReference type="OrthoDB" id="10260625at2759"/>
<dbReference type="PhylomeDB" id="P63101"/>
<dbReference type="TreeFam" id="TF102003"/>
<dbReference type="Reactome" id="R-MMU-111447">
    <property type="pathway name" value="Activation of BAD and translocation to mitochondria"/>
</dbReference>
<dbReference type="Reactome" id="R-MMU-3769402">
    <property type="pathway name" value="Deactivation of the beta-catenin transactivating complex"/>
</dbReference>
<dbReference type="Reactome" id="R-MMU-392517">
    <property type="pathway name" value="Rap1 signalling"/>
</dbReference>
<dbReference type="Reactome" id="R-MMU-430116">
    <property type="pathway name" value="GP1b-IX-V activation signalling"/>
</dbReference>
<dbReference type="Reactome" id="R-MMU-450604">
    <property type="pathway name" value="KSRP (KHSRP) binds and destabilizes mRNA"/>
</dbReference>
<dbReference type="Reactome" id="R-MMU-512988">
    <property type="pathway name" value="Interleukin-3, Interleukin-5 and GM-CSF signaling"/>
</dbReference>
<dbReference type="Reactome" id="R-MMU-5625740">
    <property type="pathway name" value="RHO GTPases activate PKNs"/>
</dbReference>
<dbReference type="Reactome" id="R-MMU-5628897">
    <property type="pathway name" value="TP53 Regulates Metabolic Genes"/>
</dbReference>
<dbReference type="Reactome" id="R-MMU-75035">
    <property type="pathway name" value="Chk1/Chk2(Cds1) mediated inactivation of Cyclin B:Cdk1 complex"/>
</dbReference>
<dbReference type="Reactome" id="R-MMU-9013700">
    <property type="pathway name" value="NOTCH4 Activation and Transmission of Signal to the Nucleus"/>
</dbReference>
<dbReference type="Reactome" id="R-MMU-9614399">
    <property type="pathway name" value="Regulation of localization of FOXO transcription factors"/>
</dbReference>
<dbReference type="BioGRID-ORCS" id="22631">
    <property type="hits" value="12 hits in 120 CRISPR screens"/>
</dbReference>
<dbReference type="CD-CODE" id="CE726F99">
    <property type="entry name" value="Postsynaptic density"/>
</dbReference>
<dbReference type="ChiTaRS" id="Ywhaz">
    <property type="organism name" value="mouse"/>
</dbReference>
<dbReference type="PRO" id="PR:P63101"/>
<dbReference type="Proteomes" id="UP000000589">
    <property type="component" value="Chromosome 15"/>
</dbReference>
<dbReference type="RNAct" id="P63101">
    <property type="molecule type" value="protein"/>
</dbReference>
<dbReference type="Bgee" id="ENSMUSG00000022285">
    <property type="expression patterns" value="Expressed in olfactory tubercle and 280 other cell types or tissues"/>
</dbReference>
<dbReference type="ExpressionAtlas" id="P63101">
    <property type="expression patterns" value="baseline and differential"/>
</dbReference>
<dbReference type="GO" id="GO:0005829">
    <property type="term" value="C:cytosol"/>
    <property type="evidence" value="ECO:0000304"/>
    <property type="project" value="Reactome"/>
</dbReference>
<dbReference type="GO" id="GO:0098978">
    <property type="term" value="C:glutamatergic synapse"/>
    <property type="evidence" value="ECO:0007669"/>
    <property type="project" value="Ensembl"/>
</dbReference>
<dbReference type="GO" id="GO:0098686">
    <property type="term" value="C:hippocampal mossy fiber to CA3 synapse"/>
    <property type="evidence" value="ECO:0000314"/>
    <property type="project" value="SynGO"/>
</dbReference>
<dbReference type="GO" id="GO:0042470">
    <property type="term" value="C:melanosome"/>
    <property type="evidence" value="ECO:0007669"/>
    <property type="project" value="UniProtKB-SubCell"/>
</dbReference>
<dbReference type="GO" id="GO:0005739">
    <property type="term" value="C:mitochondrion"/>
    <property type="evidence" value="ECO:0007005"/>
    <property type="project" value="MGI"/>
</dbReference>
<dbReference type="GO" id="GO:0005634">
    <property type="term" value="C:nucleus"/>
    <property type="evidence" value="ECO:0000314"/>
    <property type="project" value="MGI"/>
</dbReference>
<dbReference type="GO" id="GO:0140297">
    <property type="term" value="F:DNA-binding transcription factor binding"/>
    <property type="evidence" value="ECO:0007669"/>
    <property type="project" value="Ensembl"/>
</dbReference>
<dbReference type="GO" id="GO:0042802">
    <property type="term" value="F:identical protein binding"/>
    <property type="evidence" value="ECO:0007669"/>
    <property type="project" value="Ensembl"/>
</dbReference>
<dbReference type="GO" id="GO:0050815">
    <property type="term" value="F:phosphoserine residue binding"/>
    <property type="evidence" value="ECO:0000250"/>
    <property type="project" value="UniProtKB"/>
</dbReference>
<dbReference type="GO" id="GO:0019904">
    <property type="term" value="F:protein domain specific binding"/>
    <property type="evidence" value="ECO:0000314"/>
    <property type="project" value="UniProtKB"/>
</dbReference>
<dbReference type="GO" id="GO:0019901">
    <property type="term" value="F:protein kinase binding"/>
    <property type="evidence" value="ECO:0007669"/>
    <property type="project" value="Ensembl"/>
</dbReference>
<dbReference type="GO" id="GO:0019903">
    <property type="term" value="F:protein phosphatase binding"/>
    <property type="evidence" value="ECO:0007669"/>
    <property type="project" value="Ensembl"/>
</dbReference>
<dbReference type="GO" id="GO:0140311">
    <property type="term" value="F:protein sequestering activity"/>
    <property type="evidence" value="ECO:0000250"/>
    <property type="project" value="UniProtKB"/>
</dbReference>
<dbReference type="GO" id="GO:0044325">
    <property type="term" value="F:transmembrane transporter binding"/>
    <property type="evidence" value="ECO:0007669"/>
    <property type="project" value="Ensembl"/>
</dbReference>
<dbReference type="GO" id="GO:0031625">
    <property type="term" value="F:ubiquitin protein ligase binding"/>
    <property type="evidence" value="ECO:0007669"/>
    <property type="project" value="Ensembl"/>
</dbReference>
<dbReference type="GO" id="GO:0001525">
    <property type="term" value="P:angiogenesis"/>
    <property type="evidence" value="ECO:0000315"/>
    <property type="project" value="MGI"/>
</dbReference>
<dbReference type="GO" id="GO:0042149">
    <property type="term" value="P:cellular response to glucose starvation"/>
    <property type="evidence" value="ECO:0007669"/>
    <property type="project" value="Ensembl"/>
</dbReference>
<dbReference type="GO" id="GO:0070371">
    <property type="term" value="P:ERK1 and ERK2 cascade"/>
    <property type="evidence" value="ECO:0000315"/>
    <property type="project" value="MGI"/>
</dbReference>
<dbReference type="GO" id="GO:0051683">
    <property type="term" value="P:establishment of Golgi localization"/>
    <property type="evidence" value="ECO:0007669"/>
    <property type="project" value="Ensembl"/>
</dbReference>
<dbReference type="GO" id="GO:0090168">
    <property type="term" value="P:Golgi reassembly"/>
    <property type="evidence" value="ECO:0007669"/>
    <property type="project" value="Ensembl"/>
</dbReference>
<dbReference type="GO" id="GO:0030324">
    <property type="term" value="P:lung development"/>
    <property type="evidence" value="ECO:0000315"/>
    <property type="project" value="MGI"/>
</dbReference>
<dbReference type="GO" id="GO:0045824">
    <property type="term" value="P:negative regulation of innate immune response"/>
    <property type="evidence" value="ECO:0007669"/>
    <property type="project" value="Ensembl"/>
</dbReference>
<dbReference type="GO" id="GO:1900181">
    <property type="term" value="P:negative regulation of protein localization to nucleus"/>
    <property type="evidence" value="ECO:0007669"/>
    <property type="project" value="Ensembl"/>
</dbReference>
<dbReference type="GO" id="GO:1904262">
    <property type="term" value="P:negative regulation of TORC1 signaling"/>
    <property type="evidence" value="ECO:0007669"/>
    <property type="project" value="Ensembl"/>
</dbReference>
<dbReference type="GO" id="GO:0000122">
    <property type="term" value="P:negative regulation of transcription by RNA polymerase II"/>
    <property type="evidence" value="ECO:0000314"/>
    <property type="project" value="ComplexPortal"/>
</dbReference>
<dbReference type="GO" id="GO:0006468">
    <property type="term" value="P:protein phosphorylation"/>
    <property type="evidence" value="ECO:0000250"/>
    <property type="project" value="UniProtKB"/>
</dbReference>
<dbReference type="GO" id="GO:0006605">
    <property type="term" value="P:protein targeting"/>
    <property type="evidence" value="ECO:0000314"/>
    <property type="project" value="MGI"/>
</dbReference>
<dbReference type="GO" id="GO:0070372">
    <property type="term" value="P:regulation of ERK1 and ERK2 cascade"/>
    <property type="evidence" value="ECO:0000250"/>
    <property type="project" value="UniProtKB"/>
</dbReference>
<dbReference type="GO" id="GO:0043067">
    <property type="term" value="P:regulation of programmed cell death"/>
    <property type="evidence" value="ECO:0000316"/>
    <property type="project" value="MGI"/>
</dbReference>
<dbReference type="GO" id="GO:0090128">
    <property type="term" value="P:regulation of synapse maturation"/>
    <property type="evidence" value="ECO:0007669"/>
    <property type="project" value="Ensembl"/>
</dbReference>
<dbReference type="GO" id="GO:0003016">
    <property type="term" value="P:respiratory system process"/>
    <property type="evidence" value="ECO:0000315"/>
    <property type="project" value="MGI"/>
</dbReference>
<dbReference type="GO" id="GO:0007165">
    <property type="term" value="P:signal transduction"/>
    <property type="evidence" value="ECO:0000250"/>
    <property type="project" value="UniProtKB"/>
</dbReference>
<dbReference type="GO" id="GO:0008039">
    <property type="term" value="P:synaptic target recognition"/>
    <property type="evidence" value="ECO:0000314"/>
    <property type="project" value="SynGO"/>
</dbReference>
<dbReference type="GO" id="GO:0035148">
    <property type="term" value="P:tube formation"/>
    <property type="evidence" value="ECO:0000315"/>
    <property type="project" value="MGI"/>
</dbReference>
<dbReference type="CDD" id="cd10022">
    <property type="entry name" value="14-3-3_beta_zeta"/>
    <property type="match status" value="1"/>
</dbReference>
<dbReference type="DisProt" id="DP02943"/>
<dbReference type="FunFam" id="1.20.190.20:FF:000001">
    <property type="entry name" value="14-3-3 gamma 1"/>
    <property type="match status" value="1"/>
</dbReference>
<dbReference type="Gene3D" id="1.20.190.20">
    <property type="entry name" value="14-3-3 domain"/>
    <property type="match status" value="1"/>
</dbReference>
<dbReference type="InterPro" id="IPR000308">
    <property type="entry name" value="14-3-3"/>
</dbReference>
<dbReference type="InterPro" id="IPR023409">
    <property type="entry name" value="14-3-3_CS"/>
</dbReference>
<dbReference type="InterPro" id="IPR036815">
    <property type="entry name" value="14-3-3_dom_sf"/>
</dbReference>
<dbReference type="InterPro" id="IPR023410">
    <property type="entry name" value="14-3-3_domain"/>
</dbReference>
<dbReference type="PANTHER" id="PTHR18860">
    <property type="entry name" value="14-3-3 PROTEIN"/>
    <property type="match status" value="1"/>
</dbReference>
<dbReference type="Pfam" id="PF00244">
    <property type="entry name" value="14-3-3"/>
    <property type="match status" value="1"/>
</dbReference>
<dbReference type="PIRSF" id="PIRSF000868">
    <property type="entry name" value="14-3-3"/>
    <property type="match status" value="1"/>
</dbReference>
<dbReference type="PRINTS" id="PR00305">
    <property type="entry name" value="1433ZETA"/>
</dbReference>
<dbReference type="SMART" id="SM00101">
    <property type="entry name" value="14_3_3"/>
    <property type="match status" value="1"/>
</dbReference>
<dbReference type="SUPFAM" id="SSF48445">
    <property type="entry name" value="14-3-3 protein"/>
    <property type="match status" value="1"/>
</dbReference>
<dbReference type="PROSITE" id="PS00796">
    <property type="entry name" value="1433_1"/>
    <property type="match status" value="1"/>
</dbReference>
<dbReference type="PROSITE" id="PS00797">
    <property type="entry name" value="1433_2"/>
    <property type="match status" value="1"/>
</dbReference>
<sequence length="245" mass="27771">MDKNELVQKAKLAEQAERYDDMAACMKSVTEQGAELSNEERNLLSVAYKNVVGARRSSWRVVSSIEQKTEGAEKKQQMAREYREKIETELRDICNDVLSLLEKFLIPNASQPESKVFYLKMKGDYYRYLAEVAAGDDKKGIVDQSQQAYQEAFEISKKEMQPTHPIRLGLALNFSVFYYEILNSPEKACSLAKTAFDEAIAELDTLSEESYKDSTLIMQLLRDNLTLWTSDTQGDEAEAGEGGEN</sequence>
<protein>
    <recommendedName>
        <fullName>14-3-3 protein zeta/delta</fullName>
    </recommendedName>
    <alternativeName>
        <fullName>Protein kinase C inhibitor protein 1</fullName>
        <shortName>KCIP-1</shortName>
    </alternativeName>
    <alternativeName>
        <fullName>SEZ-2</fullName>
    </alternativeName>
</protein>
<name>1433Z_MOUSE</name>